<comment type="catalytic activity">
    <reaction evidence="1">
        <text>tRNA(Cys) + L-cysteine + ATP = L-cysteinyl-tRNA(Cys) + AMP + diphosphate</text>
        <dbReference type="Rhea" id="RHEA:17773"/>
        <dbReference type="Rhea" id="RHEA-COMP:9661"/>
        <dbReference type="Rhea" id="RHEA-COMP:9679"/>
        <dbReference type="ChEBI" id="CHEBI:30616"/>
        <dbReference type="ChEBI" id="CHEBI:33019"/>
        <dbReference type="ChEBI" id="CHEBI:35235"/>
        <dbReference type="ChEBI" id="CHEBI:78442"/>
        <dbReference type="ChEBI" id="CHEBI:78517"/>
        <dbReference type="ChEBI" id="CHEBI:456215"/>
        <dbReference type="EC" id="6.1.1.16"/>
    </reaction>
</comment>
<comment type="cofactor">
    <cofactor evidence="1">
        <name>Zn(2+)</name>
        <dbReference type="ChEBI" id="CHEBI:29105"/>
    </cofactor>
    <text evidence="1">Binds 1 zinc ion per subunit.</text>
</comment>
<comment type="subunit">
    <text evidence="1">Monomer.</text>
</comment>
<comment type="subcellular location">
    <subcellularLocation>
        <location evidence="1">Cytoplasm</location>
    </subcellularLocation>
</comment>
<comment type="similarity">
    <text evidence="1">Belongs to the class-I aminoacyl-tRNA synthetase family.</text>
</comment>
<sequence>MLSIYNTLTKSKEVFKPLDGNKVRMYVCGMTVYDYCHLGHGRSMVAFDLVTRWLRFSGYDLTYVRNITDIDDKIINRARDNGESFDALTARMIDAMHEDEARLNILKPDMEPRATDHIPGMHAMIQTLIDKGYAYAPGNGDVYYRVGKFQGYGKLSRKKIEDLRIGARIEVDESKQDPLDFVLWKGVKPGEPSWESPWGAGRPGWHIECSVMSTCCLGDTFDIHGGGSDLEFPHHENEIAQSEAATGKPYANAWLHCGMIRINGEKMSKSLNNFFTLRDVLEKYHPEVVRYLLVSSHYRSAINYSEDSLRESKAALERFYHALKGLPAAEPAGGEAFVERFTTAMNDDFGTPEACAVLFEMVREINRLRETDVAAAAGLAARLKQLASVLGVLQLEADDFLRAGAQGRVDAAEVEALIQARLAARAAKDWAESDRIRDQITAMGVLLEDGKGGTTWRLGD</sequence>
<accession>Q87YQ2</accession>
<feature type="chain" id="PRO_0000159462" description="Cysteine--tRNA ligase">
    <location>
        <begin position="1"/>
        <end position="460"/>
    </location>
</feature>
<feature type="short sequence motif" description="'HIGH' region">
    <location>
        <begin position="30"/>
        <end position="40"/>
    </location>
</feature>
<feature type="short sequence motif" description="'KMSKS' region">
    <location>
        <begin position="266"/>
        <end position="270"/>
    </location>
</feature>
<feature type="binding site" evidence="1">
    <location>
        <position position="28"/>
    </location>
    <ligand>
        <name>Zn(2+)</name>
        <dbReference type="ChEBI" id="CHEBI:29105"/>
    </ligand>
</feature>
<feature type="binding site" evidence="1">
    <location>
        <position position="209"/>
    </location>
    <ligand>
        <name>Zn(2+)</name>
        <dbReference type="ChEBI" id="CHEBI:29105"/>
    </ligand>
</feature>
<feature type="binding site" evidence="1">
    <location>
        <position position="234"/>
    </location>
    <ligand>
        <name>Zn(2+)</name>
        <dbReference type="ChEBI" id="CHEBI:29105"/>
    </ligand>
</feature>
<feature type="binding site" evidence="1">
    <location>
        <position position="238"/>
    </location>
    <ligand>
        <name>Zn(2+)</name>
        <dbReference type="ChEBI" id="CHEBI:29105"/>
    </ligand>
</feature>
<feature type="binding site" evidence="1">
    <location>
        <position position="269"/>
    </location>
    <ligand>
        <name>ATP</name>
        <dbReference type="ChEBI" id="CHEBI:30616"/>
    </ligand>
</feature>
<name>SYC_PSESM</name>
<protein>
    <recommendedName>
        <fullName evidence="1">Cysteine--tRNA ligase</fullName>
        <ecNumber evidence="1">6.1.1.16</ecNumber>
    </recommendedName>
    <alternativeName>
        <fullName evidence="1">Cysteinyl-tRNA synthetase</fullName>
        <shortName evidence="1">CysRS</shortName>
    </alternativeName>
</protein>
<keyword id="KW-0030">Aminoacyl-tRNA synthetase</keyword>
<keyword id="KW-0067">ATP-binding</keyword>
<keyword id="KW-0963">Cytoplasm</keyword>
<keyword id="KW-0436">Ligase</keyword>
<keyword id="KW-0479">Metal-binding</keyword>
<keyword id="KW-0547">Nucleotide-binding</keyword>
<keyword id="KW-0648">Protein biosynthesis</keyword>
<keyword id="KW-1185">Reference proteome</keyword>
<keyword id="KW-0862">Zinc</keyword>
<proteinExistence type="inferred from homology"/>
<gene>
    <name evidence="1" type="primary">cysS</name>
    <name type="ordered locus">PSPTO_3742</name>
</gene>
<organism>
    <name type="scientific">Pseudomonas syringae pv. tomato (strain ATCC BAA-871 / DC3000)</name>
    <dbReference type="NCBI Taxonomy" id="223283"/>
    <lineage>
        <taxon>Bacteria</taxon>
        <taxon>Pseudomonadati</taxon>
        <taxon>Pseudomonadota</taxon>
        <taxon>Gammaproteobacteria</taxon>
        <taxon>Pseudomonadales</taxon>
        <taxon>Pseudomonadaceae</taxon>
        <taxon>Pseudomonas</taxon>
    </lineage>
</organism>
<dbReference type="EC" id="6.1.1.16" evidence="1"/>
<dbReference type="EMBL" id="AE016853">
    <property type="protein sequence ID" value="AAO57211.1"/>
    <property type="molecule type" value="Genomic_DNA"/>
</dbReference>
<dbReference type="RefSeq" id="NP_793516.1">
    <property type="nucleotide sequence ID" value="NC_004578.1"/>
</dbReference>
<dbReference type="RefSeq" id="WP_005769192.1">
    <property type="nucleotide sequence ID" value="NC_004578.1"/>
</dbReference>
<dbReference type="SMR" id="Q87YQ2"/>
<dbReference type="STRING" id="223283.PSPTO_3742"/>
<dbReference type="GeneID" id="1185410"/>
<dbReference type="KEGG" id="pst:PSPTO_3742"/>
<dbReference type="PATRIC" id="fig|223283.9.peg.3834"/>
<dbReference type="eggNOG" id="COG0215">
    <property type="taxonomic scope" value="Bacteria"/>
</dbReference>
<dbReference type="HOGENOM" id="CLU_013528_0_1_6"/>
<dbReference type="OrthoDB" id="9815130at2"/>
<dbReference type="PhylomeDB" id="Q87YQ2"/>
<dbReference type="Proteomes" id="UP000002515">
    <property type="component" value="Chromosome"/>
</dbReference>
<dbReference type="GO" id="GO:0005829">
    <property type="term" value="C:cytosol"/>
    <property type="evidence" value="ECO:0007669"/>
    <property type="project" value="TreeGrafter"/>
</dbReference>
<dbReference type="GO" id="GO:0005524">
    <property type="term" value="F:ATP binding"/>
    <property type="evidence" value="ECO:0007669"/>
    <property type="project" value="UniProtKB-UniRule"/>
</dbReference>
<dbReference type="GO" id="GO:0004817">
    <property type="term" value="F:cysteine-tRNA ligase activity"/>
    <property type="evidence" value="ECO:0007669"/>
    <property type="project" value="UniProtKB-UniRule"/>
</dbReference>
<dbReference type="GO" id="GO:0008270">
    <property type="term" value="F:zinc ion binding"/>
    <property type="evidence" value="ECO:0007669"/>
    <property type="project" value="UniProtKB-UniRule"/>
</dbReference>
<dbReference type="GO" id="GO:0006423">
    <property type="term" value="P:cysteinyl-tRNA aminoacylation"/>
    <property type="evidence" value="ECO:0007669"/>
    <property type="project" value="UniProtKB-UniRule"/>
</dbReference>
<dbReference type="CDD" id="cd07963">
    <property type="entry name" value="Anticodon_Ia_Cys"/>
    <property type="match status" value="1"/>
</dbReference>
<dbReference type="CDD" id="cd00672">
    <property type="entry name" value="CysRS_core"/>
    <property type="match status" value="1"/>
</dbReference>
<dbReference type="FunFam" id="3.40.50.620:FF:000009">
    <property type="entry name" value="Cysteine--tRNA ligase"/>
    <property type="match status" value="1"/>
</dbReference>
<dbReference type="Gene3D" id="1.20.120.1910">
    <property type="entry name" value="Cysteine-tRNA ligase, C-terminal anti-codon recognition domain"/>
    <property type="match status" value="1"/>
</dbReference>
<dbReference type="Gene3D" id="3.40.50.620">
    <property type="entry name" value="HUPs"/>
    <property type="match status" value="1"/>
</dbReference>
<dbReference type="HAMAP" id="MF_00041">
    <property type="entry name" value="Cys_tRNA_synth"/>
    <property type="match status" value="1"/>
</dbReference>
<dbReference type="InterPro" id="IPR015803">
    <property type="entry name" value="Cys-tRNA-ligase"/>
</dbReference>
<dbReference type="InterPro" id="IPR015273">
    <property type="entry name" value="Cys-tRNA-synt_Ia_DALR"/>
</dbReference>
<dbReference type="InterPro" id="IPR024909">
    <property type="entry name" value="Cys-tRNA/MSH_ligase"/>
</dbReference>
<dbReference type="InterPro" id="IPR056411">
    <property type="entry name" value="CysS_C"/>
</dbReference>
<dbReference type="InterPro" id="IPR014729">
    <property type="entry name" value="Rossmann-like_a/b/a_fold"/>
</dbReference>
<dbReference type="InterPro" id="IPR032678">
    <property type="entry name" value="tRNA-synt_1_cat_dom"/>
</dbReference>
<dbReference type="InterPro" id="IPR009080">
    <property type="entry name" value="tRNAsynth_Ia_anticodon-bd"/>
</dbReference>
<dbReference type="NCBIfam" id="TIGR00435">
    <property type="entry name" value="cysS"/>
    <property type="match status" value="1"/>
</dbReference>
<dbReference type="PANTHER" id="PTHR10890:SF3">
    <property type="entry name" value="CYSTEINE--TRNA LIGASE, CYTOPLASMIC"/>
    <property type="match status" value="1"/>
</dbReference>
<dbReference type="PANTHER" id="PTHR10890">
    <property type="entry name" value="CYSTEINYL-TRNA SYNTHETASE"/>
    <property type="match status" value="1"/>
</dbReference>
<dbReference type="Pfam" id="PF23493">
    <property type="entry name" value="CysS_C"/>
    <property type="match status" value="1"/>
</dbReference>
<dbReference type="Pfam" id="PF09190">
    <property type="entry name" value="DALR_2"/>
    <property type="match status" value="1"/>
</dbReference>
<dbReference type="Pfam" id="PF01406">
    <property type="entry name" value="tRNA-synt_1e"/>
    <property type="match status" value="1"/>
</dbReference>
<dbReference type="PRINTS" id="PR00983">
    <property type="entry name" value="TRNASYNTHCYS"/>
</dbReference>
<dbReference type="SMART" id="SM00840">
    <property type="entry name" value="DALR_2"/>
    <property type="match status" value="1"/>
</dbReference>
<dbReference type="SUPFAM" id="SSF47323">
    <property type="entry name" value="Anticodon-binding domain of a subclass of class I aminoacyl-tRNA synthetases"/>
    <property type="match status" value="1"/>
</dbReference>
<dbReference type="SUPFAM" id="SSF52374">
    <property type="entry name" value="Nucleotidylyl transferase"/>
    <property type="match status" value="1"/>
</dbReference>
<evidence type="ECO:0000255" key="1">
    <source>
        <dbReference type="HAMAP-Rule" id="MF_00041"/>
    </source>
</evidence>
<reference key="1">
    <citation type="journal article" date="2003" name="Proc. Natl. Acad. Sci. U.S.A.">
        <title>The complete genome sequence of the Arabidopsis and tomato pathogen Pseudomonas syringae pv. tomato DC3000.</title>
        <authorList>
            <person name="Buell C.R."/>
            <person name="Joardar V."/>
            <person name="Lindeberg M."/>
            <person name="Selengut J."/>
            <person name="Paulsen I.T."/>
            <person name="Gwinn M.L."/>
            <person name="Dodson R.J."/>
            <person name="DeBoy R.T."/>
            <person name="Durkin A.S."/>
            <person name="Kolonay J.F."/>
            <person name="Madupu R."/>
            <person name="Daugherty S.C."/>
            <person name="Brinkac L.M."/>
            <person name="Beanan M.J."/>
            <person name="Haft D.H."/>
            <person name="Nelson W.C."/>
            <person name="Davidsen T.M."/>
            <person name="Zafar N."/>
            <person name="Zhou L."/>
            <person name="Liu J."/>
            <person name="Yuan Q."/>
            <person name="Khouri H.M."/>
            <person name="Fedorova N.B."/>
            <person name="Tran B."/>
            <person name="Russell D."/>
            <person name="Berry K.J."/>
            <person name="Utterback T.R."/>
            <person name="Van Aken S.E."/>
            <person name="Feldblyum T.V."/>
            <person name="D'Ascenzo M."/>
            <person name="Deng W.-L."/>
            <person name="Ramos A.R."/>
            <person name="Alfano J.R."/>
            <person name="Cartinhour S."/>
            <person name="Chatterjee A.K."/>
            <person name="Delaney T.P."/>
            <person name="Lazarowitz S.G."/>
            <person name="Martin G.B."/>
            <person name="Schneider D.J."/>
            <person name="Tang X."/>
            <person name="Bender C.L."/>
            <person name="White O."/>
            <person name="Fraser C.M."/>
            <person name="Collmer A."/>
        </authorList>
    </citation>
    <scope>NUCLEOTIDE SEQUENCE [LARGE SCALE GENOMIC DNA]</scope>
    <source>
        <strain>ATCC BAA-871 / DC3000</strain>
    </source>
</reference>